<comment type="function">
    <text evidence="1">May play a role in vesicle trafficking.</text>
</comment>
<comment type="interaction">
    <interactant intactId="EBI-9160824">
        <id>Q8VYN2</id>
    </interactant>
    <interactant intactId="EBI-4441057">
        <id>Q9SSA8</id>
        <label>RAP2-12</label>
    </interactant>
    <organismsDiffer>false</organismsDiffer>
    <experiments>3</experiments>
</comment>
<comment type="alternative products">
    <event type="alternative splicing"/>
    <isoform>
        <id>Q8VYN2-1</id>
        <name>1</name>
        <sequence type="displayed"/>
    </isoform>
    <isoform>
        <id>Q8VYN2-2</id>
        <name>2</name>
        <sequence type="described" ref="VSP_040256 VSP_040257"/>
    </isoform>
</comment>
<comment type="similarity">
    <text evidence="4">Belongs to the VAMP-associated protein (VAP) (TC 9.B.17) family.</text>
</comment>
<comment type="sequence caution" evidence="4">
    <conflict type="erroneous gene model prediction">
        <sequence resource="EMBL-CDS" id="CAA18709"/>
    </conflict>
</comment>
<comment type="sequence caution" evidence="4">
    <conflict type="erroneous gene model prediction">
        <sequence resource="EMBL-CDS" id="CAB81252"/>
    </conflict>
</comment>
<organism>
    <name type="scientific">Arabidopsis thaliana</name>
    <name type="common">Mouse-ear cress</name>
    <dbReference type="NCBI Taxonomy" id="3702"/>
    <lineage>
        <taxon>Eukaryota</taxon>
        <taxon>Viridiplantae</taxon>
        <taxon>Streptophyta</taxon>
        <taxon>Embryophyta</taxon>
        <taxon>Tracheophyta</taxon>
        <taxon>Spermatophyta</taxon>
        <taxon>Magnoliopsida</taxon>
        <taxon>eudicotyledons</taxon>
        <taxon>Gunneridae</taxon>
        <taxon>Pentapetalae</taxon>
        <taxon>rosids</taxon>
        <taxon>malvids</taxon>
        <taxon>Brassicales</taxon>
        <taxon>Brassicaceae</taxon>
        <taxon>Camelineae</taxon>
        <taxon>Arabidopsis</taxon>
    </lineage>
</organism>
<keyword id="KW-0025">Alternative splicing</keyword>
<keyword id="KW-0597">Phosphoprotein</keyword>
<keyword id="KW-1185">Reference proteome</keyword>
<reference key="1">
    <citation type="journal article" date="1999" name="Nature">
        <title>Sequence and analysis of chromosome 4 of the plant Arabidopsis thaliana.</title>
        <authorList>
            <person name="Mayer K.F.X."/>
            <person name="Schueller C."/>
            <person name="Wambutt R."/>
            <person name="Murphy G."/>
            <person name="Volckaert G."/>
            <person name="Pohl T."/>
            <person name="Duesterhoeft A."/>
            <person name="Stiekema W."/>
            <person name="Entian K.-D."/>
            <person name="Terryn N."/>
            <person name="Harris B."/>
            <person name="Ansorge W."/>
            <person name="Brandt P."/>
            <person name="Grivell L.A."/>
            <person name="Rieger M."/>
            <person name="Weichselgartner M."/>
            <person name="de Simone V."/>
            <person name="Obermaier B."/>
            <person name="Mache R."/>
            <person name="Mueller M."/>
            <person name="Kreis M."/>
            <person name="Delseny M."/>
            <person name="Puigdomenech P."/>
            <person name="Watson M."/>
            <person name="Schmidtheini T."/>
            <person name="Reichert B."/>
            <person name="Portetelle D."/>
            <person name="Perez-Alonso M."/>
            <person name="Boutry M."/>
            <person name="Bancroft I."/>
            <person name="Vos P."/>
            <person name="Hoheisel J."/>
            <person name="Zimmermann W."/>
            <person name="Wedler H."/>
            <person name="Ridley P."/>
            <person name="Langham S.-A."/>
            <person name="McCullagh B."/>
            <person name="Bilham L."/>
            <person name="Robben J."/>
            <person name="van der Schueren J."/>
            <person name="Grymonprez B."/>
            <person name="Chuang Y.-J."/>
            <person name="Vandenbussche F."/>
            <person name="Braeken M."/>
            <person name="Weltjens I."/>
            <person name="Voet M."/>
            <person name="Bastiaens I."/>
            <person name="Aert R."/>
            <person name="Defoor E."/>
            <person name="Weitzenegger T."/>
            <person name="Bothe G."/>
            <person name="Ramsperger U."/>
            <person name="Hilbert H."/>
            <person name="Braun M."/>
            <person name="Holzer E."/>
            <person name="Brandt A."/>
            <person name="Peters S."/>
            <person name="van Staveren M."/>
            <person name="Dirkse W."/>
            <person name="Mooijman P."/>
            <person name="Klein Lankhorst R."/>
            <person name="Rose M."/>
            <person name="Hauf J."/>
            <person name="Koetter P."/>
            <person name="Berneiser S."/>
            <person name="Hempel S."/>
            <person name="Feldpausch M."/>
            <person name="Lamberth S."/>
            <person name="Van den Daele H."/>
            <person name="De Keyser A."/>
            <person name="Buysshaert C."/>
            <person name="Gielen J."/>
            <person name="Villarroel R."/>
            <person name="De Clercq R."/>
            <person name="van Montagu M."/>
            <person name="Rogers J."/>
            <person name="Cronin A."/>
            <person name="Quail M.A."/>
            <person name="Bray-Allen S."/>
            <person name="Clark L."/>
            <person name="Doggett J."/>
            <person name="Hall S."/>
            <person name="Kay M."/>
            <person name="Lennard N."/>
            <person name="McLay K."/>
            <person name="Mayes R."/>
            <person name="Pettett A."/>
            <person name="Rajandream M.A."/>
            <person name="Lyne M."/>
            <person name="Benes V."/>
            <person name="Rechmann S."/>
            <person name="Borkova D."/>
            <person name="Bloecker H."/>
            <person name="Scharfe M."/>
            <person name="Grimm M."/>
            <person name="Loehnert T.-H."/>
            <person name="Dose S."/>
            <person name="de Haan M."/>
            <person name="Maarse A.C."/>
            <person name="Schaefer M."/>
            <person name="Mueller-Auer S."/>
            <person name="Gabel C."/>
            <person name="Fuchs M."/>
            <person name="Fartmann B."/>
            <person name="Granderath K."/>
            <person name="Dauner D."/>
            <person name="Herzl A."/>
            <person name="Neumann S."/>
            <person name="Argiriou A."/>
            <person name="Vitale D."/>
            <person name="Liguori R."/>
            <person name="Piravandi E."/>
            <person name="Massenet O."/>
            <person name="Quigley F."/>
            <person name="Clabauld G."/>
            <person name="Muendlein A."/>
            <person name="Felber R."/>
            <person name="Schnabl S."/>
            <person name="Hiller R."/>
            <person name="Schmidt W."/>
            <person name="Lecharny A."/>
            <person name="Aubourg S."/>
            <person name="Chefdor F."/>
            <person name="Cooke R."/>
            <person name="Berger C."/>
            <person name="Monfort A."/>
            <person name="Casacuberta E."/>
            <person name="Gibbons T."/>
            <person name="Weber N."/>
            <person name="Vandenbol M."/>
            <person name="Bargues M."/>
            <person name="Terol J."/>
            <person name="Torres A."/>
            <person name="Perez-Perez A."/>
            <person name="Purnelle B."/>
            <person name="Bent E."/>
            <person name="Johnson S."/>
            <person name="Tacon D."/>
            <person name="Jesse T."/>
            <person name="Heijnen L."/>
            <person name="Schwarz S."/>
            <person name="Scholler P."/>
            <person name="Heber S."/>
            <person name="Francs P."/>
            <person name="Bielke C."/>
            <person name="Frishman D."/>
            <person name="Haase D."/>
            <person name="Lemcke K."/>
            <person name="Mewes H.-W."/>
            <person name="Stocker S."/>
            <person name="Zaccaria P."/>
            <person name="Bevan M."/>
            <person name="Wilson R.K."/>
            <person name="de la Bastide M."/>
            <person name="Habermann K."/>
            <person name="Parnell L."/>
            <person name="Dedhia N."/>
            <person name="Gnoj L."/>
            <person name="Schutz K."/>
            <person name="Huang E."/>
            <person name="Spiegel L."/>
            <person name="Sekhon M."/>
            <person name="Murray J."/>
            <person name="Sheet P."/>
            <person name="Cordes M."/>
            <person name="Abu-Threideh J."/>
            <person name="Stoneking T."/>
            <person name="Kalicki J."/>
            <person name="Graves T."/>
            <person name="Harmon G."/>
            <person name="Edwards J."/>
            <person name="Latreille P."/>
            <person name="Courtney L."/>
            <person name="Cloud J."/>
            <person name="Abbott A."/>
            <person name="Scott K."/>
            <person name="Johnson D."/>
            <person name="Minx P."/>
            <person name="Bentley D."/>
            <person name="Fulton B."/>
            <person name="Miller N."/>
            <person name="Greco T."/>
            <person name="Kemp K."/>
            <person name="Kramer J."/>
            <person name="Fulton L."/>
            <person name="Mardis E."/>
            <person name="Dante M."/>
            <person name="Pepin K."/>
            <person name="Hillier L.W."/>
            <person name="Nelson J."/>
            <person name="Spieth J."/>
            <person name="Ryan E."/>
            <person name="Andrews S."/>
            <person name="Geisel C."/>
            <person name="Layman D."/>
            <person name="Du H."/>
            <person name="Ali J."/>
            <person name="Berghoff A."/>
            <person name="Jones K."/>
            <person name="Drone K."/>
            <person name="Cotton M."/>
            <person name="Joshu C."/>
            <person name="Antonoiu B."/>
            <person name="Zidanic M."/>
            <person name="Strong C."/>
            <person name="Sun H."/>
            <person name="Lamar B."/>
            <person name="Yordan C."/>
            <person name="Ma P."/>
            <person name="Zhong J."/>
            <person name="Preston R."/>
            <person name="Vil D."/>
            <person name="Shekher M."/>
            <person name="Matero A."/>
            <person name="Shah R."/>
            <person name="Swaby I.K."/>
            <person name="O'Shaughnessy A."/>
            <person name="Rodriguez M."/>
            <person name="Hoffman J."/>
            <person name="Till S."/>
            <person name="Granat S."/>
            <person name="Shohdy N."/>
            <person name="Hasegawa A."/>
            <person name="Hameed A."/>
            <person name="Lodhi M."/>
            <person name="Johnson A."/>
            <person name="Chen E."/>
            <person name="Marra M.A."/>
            <person name="Martienssen R."/>
            <person name="McCombie W.R."/>
        </authorList>
    </citation>
    <scope>NUCLEOTIDE SEQUENCE [LARGE SCALE GENOMIC DNA]</scope>
    <source>
        <strain>cv. Columbia</strain>
    </source>
</reference>
<reference key="2">
    <citation type="journal article" date="2017" name="Plant J.">
        <title>Araport11: a complete reannotation of the Arabidopsis thaliana reference genome.</title>
        <authorList>
            <person name="Cheng C.Y."/>
            <person name="Krishnakumar V."/>
            <person name="Chan A.P."/>
            <person name="Thibaud-Nissen F."/>
            <person name="Schobel S."/>
            <person name="Town C.D."/>
        </authorList>
    </citation>
    <scope>GENOME REANNOTATION</scope>
    <source>
        <strain>cv. Columbia</strain>
    </source>
</reference>
<reference key="3">
    <citation type="journal article" date="2003" name="Science">
        <title>Empirical analysis of transcriptional activity in the Arabidopsis genome.</title>
        <authorList>
            <person name="Yamada K."/>
            <person name="Lim J."/>
            <person name="Dale J.M."/>
            <person name="Chen H."/>
            <person name="Shinn P."/>
            <person name="Palm C.J."/>
            <person name="Southwick A.M."/>
            <person name="Wu H.C."/>
            <person name="Kim C.J."/>
            <person name="Nguyen M."/>
            <person name="Pham P.K."/>
            <person name="Cheuk R.F."/>
            <person name="Karlin-Newmann G."/>
            <person name="Liu S.X."/>
            <person name="Lam B."/>
            <person name="Sakano H."/>
            <person name="Wu T."/>
            <person name="Yu G."/>
            <person name="Miranda M."/>
            <person name="Quach H.L."/>
            <person name="Tripp M."/>
            <person name="Chang C.H."/>
            <person name="Lee J.M."/>
            <person name="Toriumi M.J."/>
            <person name="Chan M.M."/>
            <person name="Tang C.C."/>
            <person name="Onodera C.S."/>
            <person name="Deng J.M."/>
            <person name="Akiyama K."/>
            <person name="Ansari Y."/>
            <person name="Arakawa T."/>
            <person name="Banh J."/>
            <person name="Banno F."/>
            <person name="Bowser L."/>
            <person name="Brooks S.Y."/>
            <person name="Carninci P."/>
            <person name="Chao Q."/>
            <person name="Choy N."/>
            <person name="Enju A."/>
            <person name="Goldsmith A.D."/>
            <person name="Gurjal M."/>
            <person name="Hansen N.F."/>
            <person name="Hayashizaki Y."/>
            <person name="Johnson-Hopson C."/>
            <person name="Hsuan V.W."/>
            <person name="Iida K."/>
            <person name="Karnes M."/>
            <person name="Khan S."/>
            <person name="Koesema E."/>
            <person name="Ishida J."/>
            <person name="Jiang P.X."/>
            <person name="Jones T."/>
            <person name="Kawai J."/>
            <person name="Kamiya A."/>
            <person name="Meyers C."/>
            <person name="Nakajima M."/>
            <person name="Narusaka M."/>
            <person name="Seki M."/>
            <person name="Sakurai T."/>
            <person name="Satou M."/>
            <person name="Tamse R."/>
            <person name="Vaysberg M."/>
            <person name="Wallender E.K."/>
            <person name="Wong C."/>
            <person name="Yamamura Y."/>
            <person name="Yuan S."/>
            <person name="Shinozaki K."/>
            <person name="Davis R.W."/>
            <person name="Theologis A."/>
            <person name="Ecker J.R."/>
        </authorList>
    </citation>
    <scope>NUCLEOTIDE SEQUENCE [LARGE SCALE MRNA] (ISOFORM 1)</scope>
    <source>
        <strain>cv. Columbia</strain>
    </source>
</reference>
<reference key="4">
    <citation type="submission" date="2002-03" db="EMBL/GenBank/DDBJ databases">
        <title>Full-length cDNA from Arabidopsis thaliana.</title>
        <authorList>
            <person name="Brover V.V."/>
            <person name="Troukhan M.E."/>
            <person name="Alexandrov N.A."/>
            <person name="Lu Y.-P."/>
            <person name="Flavell R.B."/>
            <person name="Feldmann K.A."/>
        </authorList>
    </citation>
    <scope>NUCLEOTIDE SEQUENCE [LARGE SCALE MRNA] (ISOFORM 1)</scope>
</reference>
<reference key="5">
    <citation type="journal article" date="2009" name="Plant Physiol.">
        <title>Large-scale Arabidopsis phosphoproteome profiling reveals novel chloroplast kinase substrates and phosphorylation networks.</title>
        <authorList>
            <person name="Reiland S."/>
            <person name="Messerli G."/>
            <person name="Baerenfaller K."/>
            <person name="Gerrits B."/>
            <person name="Endler A."/>
            <person name="Grossmann J."/>
            <person name="Gruissem W."/>
            <person name="Baginsky S."/>
        </authorList>
    </citation>
    <scope>PHOSPHORYLATION [LARGE SCALE ANALYSIS] AT SER-294</scope>
    <scope>IDENTIFICATION BY MASS SPECTROMETRY [LARGE SCALE ANALYSIS]</scope>
</reference>
<evidence type="ECO:0000250" key="1"/>
<evidence type="ECO:0000255" key="2">
    <source>
        <dbReference type="PROSITE-ProRule" id="PRU00132"/>
    </source>
</evidence>
<evidence type="ECO:0000256" key="3">
    <source>
        <dbReference type="SAM" id="MobiDB-lite"/>
    </source>
</evidence>
<evidence type="ECO:0000305" key="4"/>
<evidence type="ECO:0007744" key="5">
    <source>
    </source>
</evidence>
<sequence length="295" mass="32964">MTMTEEKPTSDGKGGWGFFKIPFRNSSGHRNAASSAATSPFPSGASSSSTSSHLHNHHQHHHQHHHQHHHQLGYNGPHGDGSGQNQHPTPSPSVSSVAKSFLPTKRRLKLDPSEKLYFPYEPGKQVRSAIKIKNTSKSHVAFKFQTTAPKSCFMRPPGAILAPGETIIATVFKFVEPPENNEKPMDQRSRVKFKIMSLKVKGPMDYVPELFDEQKDDVSKEQILRVIFLDPERSNPALEKLKRQLAEADAAVEARKKPPEETGPKMIGEGLVIDEWKERRERYLAQQQGEGADSV</sequence>
<gene>
    <name type="primary">PVA42</name>
    <name type="ordered locus">At4g21450</name>
    <name type="ORF">F18E5.70</name>
</gene>
<feature type="chain" id="PRO_0000402177" description="Vesicle-associated protein 4-2">
    <location>
        <begin position="1"/>
        <end position="295"/>
    </location>
</feature>
<feature type="domain" description="MSP" evidence="2">
    <location>
        <begin position="107"/>
        <end position="229"/>
    </location>
</feature>
<feature type="region of interest" description="Disordered" evidence="3">
    <location>
        <begin position="1"/>
        <end position="99"/>
    </location>
</feature>
<feature type="region of interest" description="Disordered" evidence="3">
    <location>
        <begin position="249"/>
        <end position="270"/>
    </location>
</feature>
<feature type="compositionally biased region" description="Basic and acidic residues" evidence="3">
    <location>
        <begin position="1"/>
        <end position="10"/>
    </location>
</feature>
<feature type="compositionally biased region" description="Low complexity" evidence="3">
    <location>
        <begin position="31"/>
        <end position="53"/>
    </location>
</feature>
<feature type="compositionally biased region" description="Basic residues" evidence="3">
    <location>
        <begin position="54"/>
        <end position="71"/>
    </location>
</feature>
<feature type="compositionally biased region" description="Polar residues" evidence="3">
    <location>
        <begin position="83"/>
        <end position="98"/>
    </location>
</feature>
<feature type="compositionally biased region" description="Basic and acidic residues" evidence="3">
    <location>
        <begin position="249"/>
        <end position="263"/>
    </location>
</feature>
<feature type="modified residue" description="Phosphoserine" evidence="5">
    <location>
        <position position="294"/>
    </location>
</feature>
<feature type="splice variant" id="VSP_040256" description="In isoform 2." evidence="4">
    <original>FD</original>
    <variation>VC</variation>
    <location>
        <begin position="211"/>
        <end position="212"/>
    </location>
</feature>
<feature type="splice variant" id="VSP_040257" description="In isoform 2." evidence="4">
    <location>
        <begin position="213"/>
        <end position="295"/>
    </location>
</feature>
<name>VAP42_ARATH</name>
<proteinExistence type="evidence at protein level"/>
<protein>
    <recommendedName>
        <fullName>Vesicle-associated protein 4-2</fullName>
    </recommendedName>
    <alternativeName>
        <fullName>Plant VAP homolog 4-2</fullName>
        <shortName>AtPVA42</shortName>
    </alternativeName>
    <alternativeName>
        <fullName>VAMP-associated protein 4-2</fullName>
    </alternativeName>
</protein>
<accession>Q8VYN2</accession>
<accession>O65410</accession>
<accession>Q3E7Q2</accession>
<dbReference type="EMBL" id="AL022603">
    <property type="protein sequence ID" value="CAA18709.1"/>
    <property type="status" value="ALT_SEQ"/>
    <property type="molecule type" value="Genomic_DNA"/>
</dbReference>
<dbReference type="EMBL" id="AL161555">
    <property type="protein sequence ID" value="CAB81252.1"/>
    <property type="status" value="ALT_SEQ"/>
    <property type="molecule type" value="Genomic_DNA"/>
</dbReference>
<dbReference type="EMBL" id="CP002687">
    <property type="protein sequence ID" value="AEE84453.1"/>
    <property type="molecule type" value="Genomic_DNA"/>
</dbReference>
<dbReference type="EMBL" id="CP002687">
    <property type="protein sequence ID" value="AEE84454.1"/>
    <property type="molecule type" value="Genomic_DNA"/>
</dbReference>
<dbReference type="EMBL" id="AY070416">
    <property type="protein sequence ID" value="AAL49912.1"/>
    <property type="molecule type" value="mRNA"/>
</dbReference>
<dbReference type="EMBL" id="AY096741">
    <property type="protein sequence ID" value="AAM20375.1"/>
    <property type="molecule type" value="mRNA"/>
</dbReference>
<dbReference type="EMBL" id="AY087306">
    <property type="protein sequence ID" value="AAM64857.1"/>
    <property type="molecule type" value="mRNA"/>
</dbReference>
<dbReference type="PIR" id="T05153">
    <property type="entry name" value="T05153"/>
</dbReference>
<dbReference type="RefSeq" id="NP_567627.1">
    <molecule id="Q8VYN2-1"/>
    <property type="nucleotide sequence ID" value="NM_118265.5"/>
</dbReference>
<dbReference type="RefSeq" id="NP_974584.1">
    <molecule id="Q8VYN2-2"/>
    <property type="nucleotide sequence ID" value="NM_202855.1"/>
</dbReference>
<dbReference type="SMR" id="Q8VYN2"/>
<dbReference type="BioGRID" id="11600">
    <property type="interactions" value="8"/>
</dbReference>
<dbReference type="FunCoup" id="Q8VYN2">
    <property type="interactions" value="1189"/>
</dbReference>
<dbReference type="IntAct" id="Q8VYN2">
    <property type="interactions" value="8"/>
</dbReference>
<dbReference type="STRING" id="3702.Q8VYN2"/>
<dbReference type="iPTMnet" id="Q8VYN2"/>
<dbReference type="PaxDb" id="3702-AT4G21450.3"/>
<dbReference type="ProteomicsDB" id="242315">
    <molecule id="Q8VYN2-1"/>
</dbReference>
<dbReference type="EnsemblPlants" id="AT4G21450.1">
    <molecule id="Q8VYN2-1"/>
    <property type="protein sequence ID" value="AT4G21450.1"/>
    <property type="gene ID" value="AT4G21450"/>
</dbReference>
<dbReference type="EnsemblPlants" id="AT4G21450.2">
    <molecule id="Q8VYN2-2"/>
    <property type="protein sequence ID" value="AT4G21450.2"/>
    <property type="gene ID" value="AT4G21450"/>
</dbReference>
<dbReference type="GeneID" id="826300"/>
<dbReference type="Gramene" id="AT4G21450.1">
    <molecule id="Q8VYN2-1"/>
    <property type="protein sequence ID" value="AT4G21450.1"/>
    <property type="gene ID" value="AT4G21450"/>
</dbReference>
<dbReference type="Gramene" id="AT4G21450.2">
    <molecule id="Q8VYN2-2"/>
    <property type="protein sequence ID" value="AT4G21450.2"/>
    <property type="gene ID" value="AT4G21450"/>
</dbReference>
<dbReference type="KEGG" id="ath:AT4G21450"/>
<dbReference type="Araport" id="AT4G21450"/>
<dbReference type="TAIR" id="AT4G21450"/>
<dbReference type="eggNOG" id="KOG0439">
    <property type="taxonomic scope" value="Eukaryota"/>
</dbReference>
<dbReference type="HOGENOM" id="CLU_067947_0_0_1"/>
<dbReference type="InParanoid" id="Q8VYN2"/>
<dbReference type="OrthoDB" id="845153at2759"/>
<dbReference type="PhylomeDB" id="Q8VYN2"/>
<dbReference type="PRO" id="PR:Q8VYN2"/>
<dbReference type="Proteomes" id="UP000006548">
    <property type="component" value="Chromosome 4"/>
</dbReference>
<dbReference type="ExpressionAtlas" id="Q8VYN2">
    <property type="expression patterns" value="baseline and differential"/>
</dbReference>
<dbReference type="GO" id="GO:0005789">
    <property type="term" value="C:endoplasmic reticulum membrane"/>
    <property type="evidence" value="ECO:0007669"/>
    <property type="project" value="InterPro"/>
</dbReference>
<dbReference type="FunFam" id="2.60.40.10:FF:001596">
    <property type="entry name" value="vesicle-associated protein 4-1-like"/>
    <property type="match status" value="1"/>
</dbReference>
<dbReference type="Gene3D" id="2.60.40.10">
    <property type="entry name" value="Immunoglobulins"/>
    <property type="match status" value="1"/>
</dbReference>
<dbReference type="InterPro" id="IPR013783">
    <property type="entry name" value="Ig-like_fold"/>
</dbReference>
<dbReference type="InterPro" id="IPR000535">
    <property type="entry name" value="MSP_dom"/>
</dbReference>
<dbReference type="InterPro" id="IPR008962">
    <property type="entry name" value="PapD-like_sf"/>
</dbReference>
<dbReference type="InterPro" id="IPR016763">
    <property type="entry name" value="VAP"/>
</dbReference>
<dbReference type="PANTHER" id="PTHR10809">
    <property type="entry name" value="VESICLE-ASSOCIATED MEMBRANE PROTEIN-ASSOCIATED PROTEIN"/>
    <property type="match status" value="1"/>
</dbReference>
<dbReference type="PANTHER" id="PTHR10809:SF58">
    <property type="entry name" value="VESICLE-ASSOCIATED PROTEIN 4-2"/>
    <property type="match status" value="1"/>
</dbReference>
<dbReference type="Pfam" id="PF00635">
    <property type="entry name" value="Motile_Sperm"/>
    <property type="match status" value="1"/>
</dbReference>
<dbReference type="SUPFAM" id="SSF49354">
    <property type="entry name" value="PapD-like"/>
    <property type="match status" value="1"/>
</dbReference>
<dbReference type="PROSITE" id="PS50202">
    <property type="entry name" value="MSP"/>
    <property type="match status" value="1"/>
</dbReference>